<name>RNY_BACCR</name>
<gene>
    <name evidence="1" type="primary">rny</name>
    <name type="ordered locus">BC_3778</name>
</gene>
<keyword id="KW-1003">Cell membrane</keyword>
<keyword id="KW-0255">Endonuclease</keyword>
<keyword id="KW-0378">Hydrolase</keyword>
<keyword id="KW-0472">Membrane</keyword>
<keyword id="KW-0540">Nuclease</keyword>
<keyword id="KW-1185">Reference proteome</keyword>
<keyword id="KW-0694">RNA-binding</keyword>
<keyword id="KW-0812">Transmembrane</keyword>
<keyword id="KW-1133">Transmembrane helix</keyword>
<proteinExistence type="inferred from homology"/>
<comment type="function">
    <text evidence="1">Endoribonuclease that initiates mRNA decay.</text>
</comment>
<comment type="subcellular location">
    <subcellularLocation>
        <location evidence="1">Cell membrane</location>
        <topology evidence="1">Single-pass membrane protein</topology>
    </subcellularLocation>
</comment>
<comment type="similarity">
    <text evidence="1">Belongs to the RNase Y family.</text>
</comment>
<comment type="sequence caution" evidence="4">
    <conflict type="erroneous initiation">
        <sequence resource="EMBL-CDS" id="AAP10702"/>
    </conflict>
</comment>
<organism>
    <name type="scientific">Bacillus cereus (strain ATCC 14579 / DSM 31 / CCUG 7414 / JCM 2152 / NBRC 15305 / NCIMB 9373 / NCTC 2599 / NRRL B-3711)</name>
    <dbReference type="NCBI Taxonomy" id="226900"/>
    <lineage>
        <taxon>Bacteria</taxon>
        <taxon>Bacillati</taxon>
        <taxon>Bacillota</taxon>
        <taxon>Bacilli</taxon>
        <taxon>Bacillales</taxon>
        <taxon>Bacillaceae</taxon>
        <taxon>Bacillus</taxon>
        <taxon>Bacillus cereus group</taxon>
    </lineage>
</organism>
<evidence type="ECO:0000255" key="1">
    <source>
        <dbReference type="HAMAP-Rule" id="MF_00335"/>
    </source>
</evidence>
<evidence type="ECO:0000255" key="2">
    <source>
        <dbReference type="PROSITE-ProRule" id="PRU01175"/>
    </source>
</evidence>
<evidence type="ECO:0000256" key="3">
    <source>
        <dbReference type="SAM" id="MobiDB-lite"/>
    </source>
</evidence>
<evidence type="ECO:0000305" key="4"/>
<protein>
    <recommendedName>
        <fullName evidence="1">Ribonuclease Y</fullName>
        <shortName evidence="1">RNase Y</shortName>
        <ecNumber evidence="1">3.1.-.-</ecNumber>
    </recommendedName>
</protein>
<accession>Q81A17</accession>
<dbReference type="EC" id="3.1.-.-" evidence="1"/>
<dbReference type="EMBL" id="AE016877">
    <property type="protein sequence ID" value="AAP10702.1"/>
    <property type="status" value="ALT_INIT"/>
    <property type="molecule type" value="Genomic_DNA"/>
</dbReference>
<dbReference type="RefSeq" id="NP_833501.1">
    <property type="nucleotide sequence ID" value="NC_004722.1"/>
</dbReference>
<dbReference type="RefSeq" id="WP_000204912.1">
    <property type="nucleotide sequence ID" value="NC_004722.1"/>
</dbReference>
<dbReference type="SMR" id="Q81A17"/>
<dbReference type="STRING" id="226900.BC_3778"/>
<dbReference type="MetOSite" id="Q81A17"/>
<dbReference type="KEGG" id="bce:BC3778"/>
<dbReference type="PATRIC" id="fig|226900.8.peg.3894"/>
<dbReference type="HOGENOM" id="CLU_028328_1_0_9"/>
<dbReference type="Proteomes" id="UP000001417">
    <property type="component" value="Chromosome"/>
</dbReference>
<dbReference type="GO" id="GO:0005886">
    <property type="term" value="C:plasma membrane"/>
    <property type="evidence" value="ECO:0007669"/>
    <property type="project" value="UniProtKB-SubCell"/>
</dbReference>
<dbReference type="GO" id="GO:0003723">
    <property type="term" value="F:RNA binding"/>
    <property type="evidence" value="ECO:0007669"/>
    <property type="project" value="UniProtKB-UniRule"/>
</dbReference>
<dbReference type="GO" id="GO:0004521">
    <property type="term" value="F:RNA endonuclease activity"/>
    <property type="evidence" value="ECO:0007669"/>
    <property type="project" value="UniProtKB-UniRule"/>
</dbReference>
<dbReference type="GO" id="GO:0006402">
    <property type="term" value="P:mRNA catabolic process"/>
    <property type="evidence" value="ECO:0007669"/>
    <property type="project" value="UniProtKB-UniRule"/>
</dbReference>
<dbReference type="CDD" id="cd00077">
    <property type="entry name" value="HDc"/>
    <property type="match status" value="1"/>
</dbReference>
<dbReference type="CDD" id="cd22431">
    <property type="entry name" value="KH-I_RNaseY"/>
    <property type="match status" value="1"/>
</dbReference>
<dbReference type="FunFam" id="1.10.3210.10:FF:000003">
    <property type="entry name" value="Ribonuclease Y"/>
    <property type="match status" value="1"/>
</dbReference>
<dbReference type="FunFam" id="3.30.1370.10:FF:000006">
    <property type="entry name" value="Ribonuclease Y"/>
    <property type="match status" value="1"/>
</dbReference>
<dbReference type="Gene3D" id="1.10.3210.10">
    <property type="entry name" value="Hypothetical protein af1432"/>
    <property type="match status" value="1"/>
</dbReference>
<dbReference type="Gene3D" id="3.30.1370.10">
    <property type="entry name" value="K Homology domain, type 1"/>
    <property type="match status" value="1"/>
</dbReference>
<dbReference type="HAMAP" id="MF_00335">
    <property type="entry name" value="RNase_Y"/>
    <property type="match status" value="1"/>
</dbReference>
<dbReference type="InterPro" id="IPR003607">
    <property type="entry name" value="HD/PDEase_dom"/>
</dbReference>
<dbReference type="InterPro" id="IPR006674">
    <property type="entry name" value="HD_domain"/>
</dbReference>
<dbReference type="InterPro" id="IPR006675">
    <property type="entry name" value="HDIG_dom"/>
</dbReference>
<dbReference type="InterPro" id="IPR004087">
    <property type="entry name" value="KH_dom"/>
</dbReference>
<dbReference type="InterPro" id="IPR004088">
    <property type="entry name" value="KH_dom_type_1"/>
</dbReference>
<dbReference type="InterPro" id="IPR036612">
    <property type="entry name" value="KH_dom_type_1_sf"/>
</dbReference>
<dbReference type="InterPro" id="IPR017705">
    <property type="entry name" value="Ribonuclease_Y"/>
</dbReference>
<dbReference type="InterPro" id="IPR022711">
    <property type="entry name" value="RNase_Y_N"/>
</dbReference>
<dbReference type="NCBIfam" id="TIGR00277">
    <property type="entry name" value="HDIG"/>
    <property type="match status" value="1"/>
</dbReference>
<dbReference type="NCBIfam" id="TIGR03319">
    <property type="entry name" value="RNase_Y"/>
    <property type="match status" value="1"/>
</dbReference>
<dbReference type="PANTHER" id="PTHR12826">
    <property type="entry name" value="RIBONUCLEASE Y"/>
    <property type="match status" value="1"/>
</dbReference>
<dbReference type="PANTHER" id="PTHR12826:SF15">
    <property type="entry name" value="RIBONUCLEASE Y"/>
    <property type="match status" value="1"/>
</dbReference>
<dbReference type="Pfam" id="PF01966">
    <property type="entry name" value="HD"/>
    <property type="match status" value="1"/>
</dbReference>
<dbReference type="Pfam" id="PF00013">
    <property type="entry name" value="KH_1"/>
    <property type="match status" value="1"/>
</dbReference>
<dbReference type="Pfam" id="PF12072">
    <property type="entry name" value="RNase_Y_N"/>
    <property type="match status" value="1"/>
</dbReference>
<dbReference type="SMART" id="SM00471">
    <property type="entry name" value="HDc"/>
    <property type="match status" value="1"/>
</dbReference>
<dbReference type="SMART" id="SM00322">
    <property type="entry name" value="KH"/>
    <property type="match status" value="1"/>
</dbReference>
<dbReference type="SUPFAM" id="SSF54791">
    <property type="entry name" value="Eukaryotic type KH-domain (KH-domain type I)"/>
    <property type="match status" value="1"/>
</dbReference>
<dbReference type="SUPFAM" id="SSF109604">
    <property type="entry name" value="HD-domain/PDEase-like"/>
    <property type="match status" value="1"/>
</dbReference>
<dbReference type="PROSITE" id="PS51831">
    <property type="entry name" value="HD"/>
    <property type="match status" value="1"/>
</dbReference>
<dbReference type="PROSITE" id="PS50084">
    <property type="entry name" value="KH_TYPE_1"/>
    <property type="match status" value="1"/>
</dbReference>
<sequence>MTSTVWILISILLATVGAVVGFFVRKSIAEAKINGAANEARRILDGANRDAEALKKEALLEAKDEIHTLRTEAELEIRDRRSELQKQENRLMQKEENLDRKDETLDKREQQLEKKEESLVARQQQIEELESKVGELVQKQQTELERISNLTREQAKAIILGKVESEVSHEIAVMVKESEVRAKEEADKKAKEILSLAMQRCAADHVAETTVSVVNLPNDEMKGRIIGREGRNIRTLETLTGIDLIIDDTPEAVILSGFDPIRRETARIALDKLVQDGRIHPARIEEMVEKSRREVDEYIREVGEQTTFEVGVHGLHPDLIKILGRLKYRTSYGQNVLKHSMEVAYLTGLMAAELGEDEKLARRAGLLHDIGKAIDHEVEGSHVEIGVELATKYKEHPVVINSIASHHGDTEPTSIIAVLVAAADALSAARPGARSETLENYIRRLEKLEEISESYEGVEKSFAIQAGREVRILVKPDTIDDLEAHRLARDIRKRIENELDYPGHIKVTVIRETRAVEYAK</sequence>
<reference key="1">
    <citation type="journal article" date="2003" name="Nature">
        <title>Genome sequence of Bacillus cereus and comparative analysis with Bacillus anthracis.</title>
        <authorList>
            <person name="Ivanova N."/>
            <person name="Sorokin A."/>
            <person name="Anderson I."/>
            <person name="Galleron N."/>
            <person name="Candelon B."/>
            <person name="Kapatral V."/>
            <person name="Bhattacharyya A."/>
            <person name="Reznik G."/>
            <person name="Mikhailova N."/>
            <person name="Lapidus A."/>
            <person name="Chu L."/>
            <person name="Mazur M."/>
            <person name="Goltsman E."/>
            <person name="Larsen N."/>
            <person name="D'Souza M."/>
            <person name="Walunas T."/>
            <person name="Grechkin Y."/>
            <person name="Pusch G."/>
            <person name="Haselkorn R."/>
            <person name="Fonstein M."/>
            <person name="Ehrlich S.D."/>
            <person name="Overbeek R."/>
            <person name="Kyrpides N.C."/>
        </authorList>
    </citation>
    <scope>NUCLEOTIDE SEQUENCE [LARGE SCALE GENOMIC DNA]</scope>
    <source>
        <strain>ATCC 14579 / DSM 31 / CCUG 7414 / JCM 2152 / NBRC 15305 / NCIMB 9373 / NCTC 2599 / NRRL B-3711</strain>
    </source>
</reference>
<feature type="chain" id="PRO_0000344815" description="Ribonuclease Y">
    <location>
        <begin position="1"/>
        <end position="520"/>
    </location>
</feature>
<feature type="transmembrane region" description="Helical" evidence="1">
    <location>
        <begin position="4"/>
        <end position="24"/>
    </location>
</feature>
<feature type="domain" description="KH" evidence="1">
    <location>
        <begin position="210"/>
        <end position="273"/>
    </location>
</feature>
<feature type="domain" description="HD" evidence="2">
    <location>
        <begin position="336"/>
        <end position="429"/>
    </location>
</feature>
<feature type="region of interest" description="Disordered" evidence="3">
    <location>
        <begin position="86"/>
        <end position="111"/>
    </location>
</feature>